<name>ACDH1_NOVAD</name>
<comment type="catalytic activity">
    <reaction evidence="1">
        <text>acetaldehyde + NAD(+) + CoA = acetyl-CoA + NADH + H(+)</text>
        <dbReference type="Rhea" id="RHEA:23288"/>
        <dbReference type="ChEBI" id="CHEBI:15343"/>
        <dbReference type="ChEBI" id="CHEBI:15378"/>
        <dbReference type="ChEBI" id="CHEBI:57287"/>
        <dbReference type="ChEBI" id="CHEBI:57288"/>
        <dbReference type="ChEBI" id="CHEBI:57540"/>
        <dbReference type="ChEBI" id="CHEBI:57945"/>
        <dbReference type="EC" id="1.2.1.10"/>
    </reaction>
</comment>
<comment type="similarity">
    <text evidence="1">Belongs to the acetaldehyde dehydrogenase family.</text>
</comment>
<dbReference type="EC" id="1.2.1.10" evidence="1"/>
<dbReference type="EMBL" id="CP000677">
    <property type="protein sequence ID" value="ABP64547.1"/>
    <property type="molecule type" value="Genomic_DNA"/>
</dbReference>
<dbReference type="RefSeq" id="WP_011906931.1">
    <property type="nucleotide sequence ID" value="NC_009427.1"/>
</dbReference>
<dbReference type="SMR" id="A4XF36"/>
<dbReference type="KEGG" id="nar:Saro_3688"/>
<dbReference type="eggNOG" id="COG4569">
    <property type="taxonomic scope" value="Bacteria"/>
</dbReference>
<dbReference type="HOGENOM" id="CLU_062208_0_0_5"/>
<dbReference type="Proteomes" id="UP000009134">
    <property type="component" value="Plasmid pNL2"/>
</dbReference>
<dbReference type="GO" id="GO:0008774">
    <property type="term" value="F:acetaldehyde dehydrogenase (acetylating) activity"/>
    <property type="evidence" value="ECO:0007669"/>
    <property type="project" value="UniProtKB-UniRule"/>
</dbReference>
<dbReference type="GO" id="GO:0051287">
    <property type="term" value="F:NAD binding"/>
    <property type="evidence" value="ECO:0007669"/>
    <property type="project" value="UniProtKB-UniRule"/>
</dbReference>
<dbReference type="GO" id="GO:0009056">
    <property type="term" value="P:catabolic process"/>
    <property type="evidence" value="ECO:0007669"/>
    <property type="project" value="UniProtKB-KW"/>
</dbReference>
<dbReference type="CDD" id="cd23933">
    <property type="entry name" value="ALDH_C"/>
    <property type="match status" value="1"/>
</dbReference>
<dbReference type="Gene3D" id="3.30.360.10">
    <property type="entry name" value="Dihydrodipicolinate Reductase, domain 2"/>
    <property type="match status" value="1"/>
</dbReference>
<dbReference type="Gene3D" id="3.40.50.720">
    <property type="entry name" value="NAD(P)-binding Rossmann-like Domain"/>
    <property type="match status" value="1"/>
</dbReference>
<dbReference type="HAMAP" id="MF_01657">
    <property type="entry name" value="Ac_ald_DH_ac"/>
    <property type="match status" value="1"/>
</dbReference>
<dbReference type="InterPro" id="IPR003361">
    <property type="entry name" value="Acetaldehyde_dehydrogenase"/>
</dbReference>
<dbReference type="InterPro" id="IPR015426">
    <property type="entry name" value="Acetylaldehyde_DH_C"/>
</dbReference>
<dbReference type="InterPro" id="IPR036291">
    <property type="entry name" value="NAD(P)-bd_dom_sf"/>
</dbReference>
<dbReference type="InterPro" id="IPR000534">
    <property type="entry name" value="Semialdehyde_DH_NAD-bd"/>
</dbReference>
<dbReference type="NCBIfam" id="TIGR03215">
    <property type="entry name" value="ac_ald_DH_ac"/>
    <property type="match status" value="1"/>
</dbReference>
<dbReference type="NCBIfam" id="NF006157">
    <property type="entry name" value="PRK08300.1"/>
    <property type="match status" value="1"/>
</dbReference>
<dbReference type="Pfam" id="PF09290">
    <property type="entry name" value="AcetDehyd-dimer"/>
    <property type="match status" value="1"/>
</dbReference>
<dbReference type="Pfam" id="PF01118">
    <property type="entry name" value="Semialdhyde_dh"/>
    <property type="match status" value="1"/>
</dbReference>
<dbReference type="PIRSF" id="PIRSF015689">
    <property type="entry name" value="Actaldh_dh_actl"/>
    <property type="match status" value="1"/>
</dbReference>
<dbReference type="SMART" id="SM00859">
    <property type="entry name" value="Semialdhyde_dh"/>
    <property type="match status" value="1"/>
</dbReference>
<dbReference type="SUPFAM" id="SSF55347">
    <property type="entry name" value="Glyceraldehyde-3-phosphate dehydrogenase-like, C-terminal domain"/>
    <property type="match status" value="1"/>
</dbReference>
<dbReference type="SUPFAM" id="SSF51735">
    <property type="entry name" value="NAD(P)-binding Rossmann-fold domains"/>
    <property type="match status" value="1"/>
</dbReference>
<evidence type="ECO:0000255" key="1">
    <source>
        <dbReference type="HAMAP-Rule" id="MF_01657"/>
    </source>
</evidence>
<organism>
    <name type="scientific">Novosphingobium aromaticivorans (strain ATCC 700278 / DSM 12444 / CCUG 56034 / CIP 105152 / NBRC 16084 / F199)</name>
    <dbReference type="NCBI Taxonomy" id="279238"/>
    <lineage>
        <taxon>Bacteria</taxon>
        <taxon>Pseudomonadati</taxon>
        <taxon>Pseudomonadota</taxon>
        <taxon>Alphaproteobacteria</taxon>
        <taxon>Sphingomonadales</taxon>
        <taxon>Sphingomonadaceae</taxon>
        <taxon>Novosphingobium</taxon>
    </lineage>
</organism>
<reference key="1">
    <citation type="submission" date="2007-04" db="EMBL/GenBank/DDBJ databases">
        <title>Complete sequence of plasmid pNL2 of Novosphingobium aromaticivorans DSM 12444.</title>
        <authorList>
            <consortium name="US DOE Joint Genome Institute"/>
            <person name="Copeland A."/>
            <person name="Lucas S."/>
            <person name="Lapidus A."/>
            <person name="Barry K."/>
            <person name="Detter J.C."/>
            <person name="Glavina del Rio T."/>
            <person name="Hammon N."/>
            <person name="Israni S."/>
            <person name="Dalin E."/>
            <person name="Tice H."/>
            <person name="Pitluck S."/>
            <person name="Chertkov O."/>
            <person name="Han C."/>
            <person name="Thomson S."/>
            <person name="Schmutz J."/>
            <person name="Larimer F."/>
            <person name="Land M."/>
            <person name="Kyrpides N."/>
            <person name="Ivanova N."/>
            <person name="Fredrickson J."/>
            <person name="Romine M.F."/>
            <person name="Richardson P."/>
        </authorList>
    </citation>
    <scope>NUCLEOTIDE SEQUENCE [LARGE SCALE GENOMIC DNA]</scope>
    <source>
        <strain>ATCC 700278 / DSM 12444 / CCUG 56034 / CIP 105152 / NBRC 16084 / F199</strain>
    </source>
</reference>
<protein>
    <recommendedName>
        <fullName evidence="1">Acetaldehyde dehydrogenase 1</fullName>
        <ecNumber evidence="1">1.2.1.10</ecNumber>
    </recommendedName>
    <alternativeName>
        <fullName evidence="1">Acetaldehyde dehydrogenase [acetylating] 1</fullName>
    </alternativeName>
</protein>
<gene>
    <name type="ordered locus">Saro_3688</name>
</gene>
<geneLocation type="plasmid">
    <name>pNL2</name>
</geneLocation>
<accession>A4XF36</accession>
<sequence>MTRVKAAIIGSGNIGTDLMMKMIKYPQNMELAIVVGIDEKSEGLAMAREHGIATTHEGLEGLRRHPLYKEIGIAFDATSAYAHKVHDEALRADGIQVVDLTPAAIGPFTVPPVNMSQHLDQPNVNMVTCGGQATIPMVAAVARVSDKVHYAEIVASVSSRSAGPGTRANIDEFTRTTARAIEVVGGATRGKAIIILNPAEPPMIMRDTVFTLSEGADEDQIRRSVADMVAEVQKYVPGYRLKQEVQFERFGDNNKLKIPGQGEFTGIKSMIMLEVEGAGDYLPSYSGNLDIMTAAAKATGELLAARRMAAA</sequence>
<feature type="chain" id="PRO_0000387700" description="Acetaldehyde dehydrogenase 1">
    <location>
        <begin position="1"/>
        <end position="311"/>
    </location>
</feature>
<feature type="active site" description="Acyl-thioester intermediate" evidence="1">
    <location>
        <position position="129"/>
    </location>
</feature>
<feature type="binding site" evidence="1">
    <location>
        <begin position="11"/>
        <end position="14"/>
    </location>
    <ligand>
        <name>NAD(+)</name>
        <dbReference type="ChEBI" id="CHEBI:57540"/>
    </ligand>
</feature>
<feature type="binding site" evidence="1">
    <location>
        <begin position="161"/>
        <end position="169"/>
    </location>
    <ligand>
        <name>NAD(+)</name>
        <dbReference type="ChEBI" id="CHEBI:57540"/>
    </ligand>
</feature>
<feature type="binding site" evidence="1">
    <location>
        <position position="288"/>
    </location>
    <ligand>
        <name>NAD(+)</name>
        <dbReference type="ChEBI" id="CHEBI:57540"/>
    </ligand>
</feature>
<proteinExistence type="inferred from homology"/>
<keyword id="KW-0058">Aromatic hydrocarbons catabolism</keyword>
<keyword id="KW-0520">NAD</keyword>
<keyword id="KW-0560">Oxidoreductase</keyword>
<keyword id="KW-0614">Plasmid</keyword>
<keyword id="KW-1185">Reference proteome</keyword>